<reference key="1">
    <citation type="submission" date="2006-06" db="EMBL/GenBank/DDBJ databases">
        <title>Complete sequence of chromosome of Mesorhizobium sp. BNC1.</title>
        <authorList>
            <consortium name="US DOE Joint Genome Institute"/>
            <person name="Copeland A."/>
            <person name="Lucas S."/>
            <person name="Lapidus A."/>
            <person name="Barry K."/>
            <person name="Detter J.C."/>
            <person name="Glavina del Rio T."/>
            <person name="Hammon N."/>
            <person name="Israni S."/>
            <person name="Dalin E."/>
            <person name="Tice H."/>
            <person name="Pitluck S."/>
            <person name="Chertkov O."/>
            <person name="Brettin T."/>
            <person name="Bruce D."/>
            <person name="Han C."/>
            <person name="Tapia R."/>
            <person name="Gilna P."/>
            <person name="Schmutz J."/>
            <person name="Larimer F."/>
            <person name="Land M."/>
            <person name="Hauser L."/>
            <person name="Kyrpides N."/>
            <person name="Mikhailova N."/>
            <person name="Richardson P."/>
        </authorList>
    </citation>
    <scope>NUCLEOTIDE SEQUENCE [LARGE SCALE GENOMIC DNA]</scope>
    <source>
        <strain>BNC1</strain>
    </source>
</reference>
<dbReference type="EC" id="6.3.5.3" evidence="1"/>
<dbReference type="EMBL" id="CP000390">
    <property type="protein sequence ID" value="ABG62673.1"/>
    <property type="molecule type" value="Genomic_DNA"/>
</dbReference>
<dbReference type="SMR" id="Q11IV2"/>
<dbReference type="STRING" id="266779.Meso_1277"/>
<dbReference type="KEGG" id="mes:Meso_1277"/>
<dbReference type="eggNOG" id="COG0046">
    <property type="taxonomic scope" value="Bacteria"/>
</dbReference>
<dbReference type="HOGENOM" id="CLU_003100_0_1_5"/>
<dbReference type="OrthoDB" id="9804441at2"/>
<dbReference type="UniPathway" id="UPA00074">
    <property type="reaction ID" value="UER00128"/>
</dbReference>
<dbReference type="GO" id="GO:0005737">
    <property type="term" value="C:cytoplasm"/>
    <property type="evidence" value="ECO:0007669"/>
    <property type="project" value="UniProtKB-SubCell"/>
</dbReference>
<dbReference type="GO" id="GO:0005524">
    <property type="term" value="F:ATP binding"/>
    <property type="evidence" value="ECO:0007669"/>
    <property type="project" value="UniProtKB-UniRule"/>
</dbReference>
<dbReference type="GO" id="GO:0000287">
    <property type="term" value="F:magnesium ion binding"/>
    <property type="evidence" value="ECO:0007669"/>
    <property type="project" value="UniProtKB-UniRule"/>
</dbReference>
<dbReference type="GO" id="GO:0004642">
    <property type="term" value="F:phosphoribosylformylglycinamidine synthase activity"/>
    <property type="evidence" value="ECO:0007669"/>
    <property type="project" value="UniProtKB-UniRule"/>
</dbReference>
<dbReference type="GO" id="GO:0006189">
    <property type="term" value="P:'de novo' IMP biosynthetic process"/>
    <property type="evidence" value="ECO:0007669"/>
    <property type="project" value="UniProtKB-UniRule"/>
</dbReference>
<dbReference type="CDD" id="cd02203">
    <property type="entry name" value="PurL_repeat1"/>
    <property type="match status" value="1"/>
</dbReference>
<dbReference type="CDD" id="cd02204">
    <property type="entry name" value="PurL_repeat2"/>
    <property type="match status" value="1"/>
</dbReference>
<dbReference type="FunFam" id="3.30.1330.10:FF:000004">
    <property type="entry name" value="Phosphoribosylformylglycinamidine synthase subunit PurL"/>
    <property type="match status" value="1"/>
</dbReference>
<dbReference type="Gene3D" id="3.90.650.10">
    <property type="entry name" value="PurM-like C-terminal domain"/>
    <property type="match status" value="2"/>
</dbReference>
<dbReference type="Gene3D" id="3.30.1330.10">
    <property type="entry name" value="PurM-like, N-terminal domain"/>
    <property type="match status" value="2"/>
</dbReference>
<dbReference type="HAMAP" id="MF_00420">
    <property type="entry name" value="PurL_2"/>
    <property type="match status" value="1"/>
</dbReference>
<dbReference type="InterPro" id="IPR010074">
    <property type="entry name" value="PRibForGlyAmidine_synth_PurL"/>
</dbReference>
<dbReference type="InterPro" id="IPR041609">
    <property type="entry name" value="PurL_linker"/>
</dbReference>
<dbReference type="InterPro" id="IPR010918">
    <property type="entry name" value="PurM-like_C_dom"/>
</dbReference>
<dbReference type="InterPro" id="IPR036676">
    <property type="entry name" value="PurM-like_C_sf"/>
</dbReference>
<dbReference type="InterPro" id="IPR016188">
    <property type="entry name" value="PurM-like_N"/>
</dbReference>
<dbReference type="InterPro" id="IPR036921">
    <property type="entry name" value="PurM-like_N_sf"/>
</dbReference>
<dbReference type="NCBIfam" id="TIGR01736">
    <property type="entry name" value="FGAM_synth_II"/>
    <property type="match status" value="1"/>
</dbReference>
<dbReference type="NCBIfam" id="NF002290">
    <property type="entry name" value="PRK01213.1"/>
    <property type="match status" value="1"/>
</dbReference>
<dbReference type="PANTHER" id="PTHR43555">
    <property type="entry name" value="PHOSPHORIBOSYLFORMYLGLYCINAMIDINE SYNTHASE SUBUNIT PURL"/>
    <property type="match status" value="1"/>
</dbReference>
<dbReference type="PANTHER" id="PTHR43555:SF1">
    <property type="entry name" value="PHOSPHORIBOSYLFORMYLGLYCINAMIDINE SYNTHASE SUBUNIT PURL"/>
    <property type="match status" value="1"/>
</dbReference>
<dbReference type="Pfam" id="PF00586">
    <property type="entry name" value="AIRS"/>
    <property type="match status" value="2"/>
</dbReference>
<dbReference type="Pfam" id="PF02769">
    <property type="entry name" value="AIRS_C"/>
    <property type="match status" value="2"/>
</dbReference>
<dbReference type="Pfam" id="PF18072">
    <property type="entry name" value="FGAR-AT_linker"/>
    <property type="match status" value="1"/>
</dbReference>
<dbReference type="PIRSF" id="PIRSF001587">
    <property type="entry name" value="FGAM_synthase_II"/>
    <property type="match status" value="1"/>
</dbReference>
<dbReference type="SUPFAM" id="SSF56042">
    <property type="entry name" value="PurM C-terminal domain-like"/>
    <property type="match status" value="2"/>
</dbReference>
<dbReference type="SUPFAM" id="SSF55326">
    <property type="entry name" value="PurM N-terminal domain-like"/>
    <property type="match status" value="2"/>
</dbReference>
<accession>Q11IV2</accession>
<sequence>MTIPNDIRITPELVAAHGLKPDEYQRILDLIGREPTFTELGIFSAMWNEHCSYKSSKRWLRTLPTSGPQVIQGPGENAGVVDIGDGQCVVFKMESHNHPSYIEPYQGAATGVGGILRDVFTMGARPIAAMNALRFGAPDHPKTQHLVAGVVAGIGGYGNSFGVPTVGGEVNFDPRYNGNCLVNAFAAGLARTDGIFYSKAEGVGLPVVYLGAKTGRDGVGGATMASAEFDETIEEKRPTVQVGDPFTEKCLLEACLELMATGAVIAIQDMGAAGLTCSAVEMGAKGDLGIELDLDKVPVREERMSAYEMMLSESQERMLMVLRPEKEPEAEEIFRKWGLDFAIVGRTTDDLRFRILHGGEEVANLPIKELGDEAPEYDRPWAEPKMPPALDAATVPAADVADSLLKLLGSPDLSSRRWVWEQYDTLIQGNSLQIPGGDAGVVRVEDHPTKALAFSSDVTPRYCEADSFEGGKQAVAECWRNLTATGADPLAVTDNLNFGNPERPEIMGQFVRAIKGIGEACRALSFPIVSGNVSLYNETLGQAIPPTPTIAGVGLIPDWSKMARIAFAGEGQAILLAGAPESWGTHLGQSAYLRDVHGRAEGAPPPVDLAHEKRVGDFVRGVIRSGTVTAAHDCSDGGLAVALAEMAMASGIGARIDAPVNSASAAFFGEDQGRYVLTAALAREDAQLATLIEDARKAGVSLIAIGVTGGRELKLGEARAISVEELKEAHEGWFPRFMQDGSLQ</sequence>
<name>PURL_CHESB</name>
<feature type="chain" id="PRO_1000050319" description="Phosphoribosylformylglycinamidine synthase subunit PurL">
    <location>
        <begin position="1"/>
        <end position="744"/>
    </location>
</feature>
<feature type="active site" evidence="1">
    <location>
        <position position="50"/>
    </location>
</feature>
<feature type="active site" description="Proton acceptor" evidence="1">
    <location>
        <position position="96"/>
    </location>
</feature>
<feature type="binding site" evidence="1">
    <location>
        <position position="53"/>
    </location>
    <ligand>
        <name>ATP</name>
        <dbReference type="ChEBI" id="CHEBI:30616"/>
    </ligand>
</feature>
<feature type="binding site" evidence="1">
    <location>
        <position position="92"/>
    </location>
    <ligand>
        <name>ATP</name>
        <dbReference type="ChEBI" id="CHEBI:30616"/>
    </ligand>
</feature>
<feature type="binding site" evidence="1">
    <location>
        <position position="94"/>
    </location>
    <ligand>
        <name>Mg(2+)</name>
        <dbReference type="ChEBI" id="CHEBI:18420"/>
        <label>1</label>
    </ligand>
</feature>
<feature type="binding site" evidence="1">
    <location>
        <begin position="95"/>
        <end position="98"/>
    </location>
    <ligand>
        <name>substrate</name>
    </ligand>
</feature>
<feature type="binding site" evidence="1">
    <location>
        <position position="117"/>
    </location>
    <ligand>
        <name>substrate</name>
    </ligand>
</feature>
<feature type="binding site" evidence="1">
    <location>
        <position position="118"/>
    </location>
    <ligand>
        <name>Mg(2+)</name>
        <dbReference type="ChEBI" id="CHEBI:18420"/>
        <label>2</label>
    </ligand>
</feature>
<feature type="binding site" evidence="1">
    <location>
        <position position="241"/>
    </location>
    <ligand>
        <name>substrate</name>
    </ligand>
</feature>
<feature type="binding site" evidence="1">
    <location>
        <position position="269"/>
    </location>
    <ligand>
        <name>Mg(2+)</name>
        <dbReference type="ChEBI" id="CHEBI:18420"/>
        <label>2</label>
    </ligand>
</feature>
<feature type="binding site" evidence="1">
    <location>
        <begin position="313"/>
        <end position="315"/>
    </location>
    <ligand>
        <name>substrate</name>
    </ligand>
</feature>
<feature type="binding site" evidence="1">
    <location>
        <position position="494"/>
    </location>
    <ligand>
        <name>ATP</name>
        <dbReference type="ChEBI" id="CHEBI:30616"/>
    </ligand>
</feature>
<feature type="binding site" evidence="1">
    <location>
        <position position="531"/>
    </location>
    <ligand>
        <name>ATP</name>
        <dbReference type="ChEBI" id="CHEBI:30616"/>
    </ligand>
</feature>
<feature type="binding site" evidence="1">
    <location>
        <position position="532"/>
    </location>
    <ligand>
        <name>Mg(2+)</name>
        <dbReference type="ChEBI" id="CHEBI:18420"/>
        <label>1</label>
    </ligand>
</feature>
<feature type="binding site" evidence="1">
    <location>
        <position position="534"/>
    </location>
    <ligand>
        <name>substrate</name>
    </ligand>
</feature>
<evidence type="ECO:0000255" key="1">
    <source>
        <dbReference type="HAMAP-Rule" id="MF_00420"/>
    </source>
</evidence>
<protein>
    <recommendedName>
        <fullName evidence="1">Phosphoribosylformylglycinamidine synthase subunit PurL</fullName>
        <shortName evidence="1">FGAM synthase</shortName>
        <ecNumber evidence="1">6.3.5.3</ecNumber>
    </recommendedName>
    <alternativeName>
        <fullName evidence="1">Formylglycinamide ribonucleotide amidotransferase subunit II</fullName>
        <shortName evidence="1">FGAR amidotransferase II</shortName>
        <shortName evidence="1">FGAR-AT II</shortName>
    </alternativeName>
    <alternativeName>
        <fullName evidence="1">Glutamine amidotransferase PurL</fullName>
    </alternativeName>
    <alternativeName>
        <fullName evidence="1">Phosphoribosylformylglycinamidine synthase subunit II</fullName>
    </alternativeName>
</protein>
<gene>
    <name evidence="1" type="primary">purL</name>
    <name type="ordered locus">Meso_1277</name>
</gene>
<organism>
    <name type="scientific">Chelativorans sp. (strain BNC1)</name>
    <dbReference type="NCBI Taxonomy" id="266779"/>
    <lineage>
        <taxon>Bacteria</taxon>
        <taxon>Pseudomonadati</taxon>
        <taxon>Pseudomonadota</taxon>
        <taxon>Alphaproteobacteria</taxon>
        <taxon>Hyphomicrobiales</taxon>
        <taxon>Phyllobacteriaceae</taxon>
        <taxon>Chelativorans</taxon>
    </lineage>
</organism>
<keyword id="KW-0067">ATP-binding</keyword>
<keyword id="KW-0963">Cytoplasm</keyword>
<keyword id="KW-0436">Ligase</keyword>
<keyword id="KW-0460">Magnesium</keyword>
<keyword id="KW-0479">Metal-binding</keyword>
<keyword id="KW-0547">Nucleotide-binding</keyword>
<keyword id="KW-0658">Purine biosynthesis</keyword>
<comment type="function">
    <text evidence="1">Part of the phosphoribosylformylglycinamidine synthase complex involved in the purines biosynthetic pathway. Catalyzes the ATP-dependent conversion of formylglycinamide ribonucleotide (FGAR) and glutamine to yield formylglycinamidine ribonucleotide (FGAM) and glutamate. The FGAM synthase complex is composed of three subunits. PurQ produces an ammonia molecule by converting glutamine to glutamate. PurL transfers the ammonia molecule to FGAR to form FGAM in an ATP-dependent manner. PurS interacts with PurQ and PurL and is thought to assist in the transfer of the ammonia molecule from PurQ to PurL.</text>
</comment>
<comment type="catalytic activity">
    <reaction evidence="1">
        <text>N(2)-formyl-N(1)-(5-phospho-beta-D-ribosyl)glycinamide + L-glutamine + ATP + H2O = 2-formamido-N(1)-(5-O-phospho-beta-D-ribosyl)acetamidine + L-glutamate + ADP + phosphate + H(+)</text>
        <dbReference type="Rhea" id="RHEA:17129"/>
        <dbReference type="ChEBI" id="CHEBI:15377"/>
        <dbReference type="ChEBI" id="CHEBI:15378"/>
        <dbReference type="ChEBI" id="CHEBI:29985"/>
        <dbReference type="ChEBI" id="CHEBI:30616"/>
        <dbReference type="ChEBI" id="CHEBI:43474"/>
        <dbReference type="ChEBI" id="CHEBI:58359"/>
        <dbReference type="ChEBI" id="CHEBI:147286"/>
        <dbReference type="ChEBI" id="CHEBI:147287"/>
        <dbReference type="ChEBI" id="CHEBI:456216"/>
        <dbReference type="EC" id="6.3.5.3"/>
    </reaction>
</comment>
<comment type="pathway">
    <text evidence="1">Purine metabolism; IMP biosynthesis via de novo pathway; 5-amino-1-(5-phospho-D-ribosyl)imidazole from N(2)-formyl-N(1)-(5-phospho-D-ribosyl)glycinamide: step 1/2.</text>
</comment>
<comment type="subunit">
    <text evidence="1">Monomer. Part of the FGAM synthase complex composed of 1 PurL, 1 PurQ and 2 PurS subunits.</text>
</comment>
<comment type="subcellular location">
    <subcellularLocation>
        <location evidence="1">Cytoplasm</location>
    </subcellularLocation>
</comment>
<comment type="similarity">
    <text evidence="1">Belongs to the FGAMS family.</text>
</comment>
<proteinExistence type="inferred from homology"/>